<gene>
    <name type="primary">lcl3</name>
    <name type="ORF">NFIA_021220</name>
</gene>
<sequence length="295" mass="34390">MRWPPWASDSQAQQQTAKHDEHDERQAAAKSTTTSKKKDWESSVTAIDWAAFTEARTIIPTLILTSGFLGAFYIHRRYLRRFPDAVSITPSYFRRRSLLGQVTSVGDGDNFRIYHTPGGRLAGWGWLPWKKIPTSKKELRDKTVHIRLAGIDAPELAHFGRPEQPFAREAHQWLTSYLLGRRVRAYIHRPDQYQRAVASVYVRRLLDFPPLRRRDVSYEMLKRGLATVYEAKIGAEFGGEAMERKYKKAEWWAKLRGVGLWKDYRRNKTKWESPREYKTRMGLEEAAQPPVETKK</sequence>
<name>LCL3_NEOFI</name>
<dbReference type="EC" id="3.1.-.-"/>
<dbReference type="EMBL" id="DS027688">
    <property type="protein sequence ID" value="EAW23414.1"/>
    <property type="molecule type" value="Genomic_DNA"/>
</dbReference>
<dbReference type="RefSeq" id="XP_001265311.1">
    <property type="nucleotide sequence ID" value="XM_001265310.1"/>
</dbReference>
<dbReference type="SMR" id="A1D4S1"/>
<dbReference type="STRING" id="331117.A1D4S1"/>
<dbReference type="EnsemblFungi" id="EAW23414">
    <property type="protein sequence ID" value="EAW23414"/>
    <property type="gene ID" value="NFIA_021220"/>
</dbReference>
<dbReference type="GeneID" id="4591621"/>
<dbReference type="KEGG" id="nfi:NFIA_021220"/>
<dbReference type="VEuPathDB" id="FungiDB:NFIA_021220"/>
<dbReference type="eggNOG" id="ENOG502S1U4">
    <property type="taxonomic scope" value="Eukaryota"/>
</dbReference>
<dbReference type="HOGENOM" id="CLU_046484_0_1_1"/>
<dbReference type="OMA" id="IYHTPGG"/>
<dbReference type="OrthoDB" id="430293at2759"/>
<dbReference type="Proteomes" id="UP000006702">
    <property type="component" value="Unassembled WGS sequence"/>
</dbReference>
<dbReference type="GO" id="GO:0016020">
    <property type="term" value="C:membrane"/>
    <property type="evidence" value="ECO:0007669"/>
    <property type="project" value="UniProtKB-SubCell"/>
</dbReference>
<dbReference type="GO" id="GO:0005739">
    <property type="term" value="C:mitochondrion"/>
    <property type="evidence" value="ECO:0007669"/>
    <property type="project" value="UniProtKB-SubCell"/>
</dbReference>
<dbReference type="GO" id="GO:0004519">
    <property type="term" value="F:endonuclease activity"/>
    <property type="evidence" value="ECO:0007669"/>
    <property type="project" value="UniProtKB-KW"/>
</dbReference>
<dbReference type="GO" id="GO:0046872">
    <property type="term" value="F:metal ion binding"/>
    <property type="evidence" value="ECO:0007669"/>
    <property type="project" value="UniProtKB-KW"/>
</dbReference>
<dbReference type="FunFam" id="2.40.50.90:FF:000029">
    <property type="entry name" value="Probable endonuclease lcl3"/>
    <property type="match status" value="1"/>
</dbReference>
<dbReference type="Gene3D" id="2.40.50.90">
    <property type="match status" value="1"/>
</dbReference>
<dbReference type="InterPro" id="IPR035437">
    <property type="entry name" value="SNase_OB-fold_sf"/>
</dbReference>
<dbReference type="InterPro" id="IPR016071">
    <property type="entry name" value="Staphylococal_nuclease_OB-fold"/>
</dbReference>
<dbReference type="PANTHER" id="PTHR12302">
    <property type="entry name" value="EBNA2 BINDING PROTEIN P100"/>
    <property type="match status" value="1"/>
</dbReference>
<dbReference type="PANTHER" id="PTHR12302:SF3">
    <property type="entry name" value="SERINE_THREONINE-PROTEIN KINASE 31"/>
    <property type="match status" value="1"/>
</dbReference>
<dbReference type="Pfam" id="PF00565">
    <property type="entry name" value="SNase"/>
    <property type="match status" value="1"/>
</dbReference>
<dbReference type="SMART" id="SM00318">
    <property type="entry name" value="SNc"/>
    <property type="match status" value="1"/>
</dbReference>
<dbReference type="SUPFAM" id="SSF50199">
    <property type="entry name" value="Staphylococcal nuclease"/>
    <property type="match status" value="1"/>
</dbReference>
<dbReference type="PROSITE" id="PS50830">
    <property type="entry name" value="TNASE_3"/>
    <property type="match status" value="1"/>
</dbReference>
<feature type="chain" id="PRO_0000408669" description="Probable endonuclease lcl3">
    <location>
        <begin position="1"/>
        <end position="295"/>
    </location>
</feature>
<feature type="transmembrane region" description="Helical" evidence="2">
    <location>
        <begin position="52"/>
        <end position="74"/>
    </location>
</feature>
<feature type="domain" description="TNase-like" evidence="3">
    <location>
        <begin position="96"/>
        <end position="263"/>
    </location>
</feature>
<feature type="region of interest" description="Disordered" evidence="4">
    <location>
        <begin position="1"/>
        <end position="35"/>
    </location>
</feature>
<feature type="compositionally biased region" description="Basic and acidic residues" evidence="4">
    <location>
        <begin position="17"/>
        <end position="27"/>
    </location>
</feature>
<feature type="active site" evidence="3">
    <location>
        <position position="147"/>
    </location>
</feature>
<feature type="active site" evidence="3">
    <location>
        <position position="155"/>
    </location>
</feature>
<feature type="active site" evidence="3">
    <location>
        <position position="195"/>
    </location>
</feature>
<feature type="binding site" evidence="3">
    <location>
        <position position="152"/>
    </location>
    <ligand>
        <name>Ca(2+)</name>
        <dbReference type="ChEBI" id="CHEBI:29108"/>
    </ligand>
</feature>
<reference key="1">
    <citation type="journal article" date="2008" name="PLoS Genet.">
        <title>Genomic islands in the pathogenic filamentous fungus Aspergillus fumigatus.</title>
        <authorList>
            <person name="Fedorova N.D."/>
            <person name="Khaldi N."/>
            <person name="Joardar V.S."/>
            <person name="Maiti R."/>
            <person name="Amedeo P."/>
            <person name="Anderson M.J."/>
            <person name="Crabtree J."/>
            <person name="Silva J.C."/>
            <person name="Badger J.H."/>
            <person name="Albarraq A."/>
            <person name="Angiuoli S."/>
            <person name="Bussey H."/>
            <person name="Bowyer P."/>
            <person name="Cotty P.J."/>
            <person name="Dyer P.S."/>
            <person name="Egan A."/>
            <person name="Galens K."/>
            <person name="Fraser-Liggett C.M."/>
            <person name="Haas B.J."/>
            <person name="Inman J.M."/>
            <person name="Kent R."/>
            <person name="Lemieux S."/>
            <person name="Malavazi I."/>
            <person name="Orvis J."/>
            <person name="Roemer T."/>
            <person name="Ronning C.M."/>
            <person name="Sundaram J.P."/>
            <person name="Sutton G."/>
            <person name="Turner G."/>
            <person name="Venter J.C."/>
            <person name="White O.R."/>
            <person name="Whitty B.R."/>
            <person name="Youngman P."/>
            <person name="Wolfe K.H."/>
            <person name="Goldman G.H."/>
            <person name="Wortman J.R."/>
            <person name="Jiang B."/>
            <person name="Denning D.W."/>
            <person name="Nierman W.C."/>
        </authorList>
    </citation>
    <scope>NUCLEOTIDE SEQUENCE [LARGE SCALE GENOMIC DNA]</scope>
    <source>
        <strain>ATCC 1020 / DSM 3700 / CBS 544.65 / FGSC A1164 / JCM 1740 / NRRL 181 / WB 181</strain>
    </source>
</reference>
<comment type="subcellular location">
    <subcellularLocation>
        <location>Mitochondrion</location>
    </subcellularLocation>
    <subcellularLocation>
        <location evidence="1">Membrane</location>
        <topology evidence="1">Single-pass membrane protein</topology>
    </subcellularLocation>
</comment>
<comment type="similarity">
    <text evidence="5">Belongs to the LCL3 family.</text>
</comment>
<protein>
    <recommendedName>
        <fullName>Probable endonuclease lcl3</fullName>
        <ecNumber>3.1.-.-</ecNumber>
    </recommendedName>
</protein>
<accession>A1D4S1</accession>
<proteinExistence type="inferred from homology"/>
<organism>
    <name type="scientific">Neosartorya fischeri (strain ATCC 1020 / DSM 3700 / CBS 544.65 / FGSC A1164 / JCM 1740 / NRRL 181 / WB 181)</name>
    <name type="common">Aspergillus fischerianus</name>
    <dbReference type="NCBI Taxonomy" id="331117"/>
    <lineage>
        <taxon>Eukaryota</taxon>
        <taxon>Fungi</taxon>
        <taxon>Dikarya</taxon>
        <taxon>Ascomycota</taxon>
        <taxon>Pezizomycotina</taxon>
        <taxon>Eurotiomycetes</taxon>
        <taxon>Eurotiomycetidae</taxon>
        <taxon>Eurotiales</taxon>
        <taxon>Aspergillaceae</taxon>
        <taxon>Aspergillus</taxon>
        <taxon>Aspergillus subgen. Fumigati</taxon>
    </lineage>
</organism>
<evidence type="ECO:0000250" key="1"/>
<evidence type="ECO:0000255" key="2"/>
<evidence type="ECO:0000255" key="3">
    <source>
        <dbReference type="PROSITE-ProRule" id="PRU00272"/>
    </source>
</evidence>
<evidence type="ECO:0000256" key="4">
    <source>
        <dbReference type="SAM" id="MobiDB-lite"/>
    </source>
</evidence>
<evidence type="ECO:0000305" key="5"/>
<keyword id="KW-0106">Calcium</keyword>
<keyword id="KW-0255">Endonuclease</keyword>
<keyword id="KW-0378">Hydrolase</keyword>
<keyword id="KW-0472">Membrane</keyword>
<keyword id="KW-0479">Metal-binding</keyword>
<keyword id="KW-0496">Mitochondrion</keyword>
<keyword id="KW-0540">Nuclease</keyword>
<keyword id="KW-1185">Reference proteome</keyword>
<keyword id="KW-0812">Transmembrane</keyword>
<keyword id="KW-1133">Transmembrane helix</keyword>